<name>DNAK_WOLSU</name>
<protein>
    <recommendedName>
        <fullName evidence="1">Chaperone protein DnaK</fullName>
    </recommendedName>
    <alternativeName>
        <fullName evidence="1">HSP70</fullName>
    </alternativeName>
    <alternativeName>
        <fullName evidence="1">Heat shock 70 kDa protein</fullName>
    </alternativeName>
    <alternativeName>
        <fullName evidence="1">Heat shock protein 70</fullName>
    </alternativeName>
</protein>
<gene>
    <name evidence="1" type="primary">dnaK</name>
    <name type="ordered locus">WS0494</name>
</gene>
<keyword id="KW-0067">ATP-binding</keyword>
<keyword id="KW-0143">Chaperone</keyword>
<keyword id="KW-0547">Nucleotide-binding</keyword>
<keyword id="KW-0597">Phosphoprotein</keyword>
<keyword id="KW-1185">Reference proteome</keyword>
<keyword id="KW-0346">Stress response</keyword>
<accession>Q7MA35</accession>
<organism>
    <name type="scientific">Wolinella succinogenes (strain ATCC 29543 / DSM 1740 / CCUG 13145 / JCM 31913 / LMG 7466 / NCTC 11488 / FDC 602W)</name>
    <name type="common">Vibrio succinogenes</name>
    <dbReference type="NCBI Taxonomy" id="273121"/>
    <lineage>
        <taxon>Bacteria</taxon>
        <taxon>Pseudomonadati</taxon>
        <taxon>Campylobacterota</taxon>
        <taxon>Epsilonproteobacteria</taxon>
        <taxon>Campylobacterales</taxon>
        <taxon>Helicobacteraceae</taxon>
        <taxon>Wolinella</taxon>
    </lineage>
</organism>
<comment type="function">
    <text evidence="1">Acts as a chaperone.</text>
</comment>
<comment type="induction">
    <text evidence="1">By stress conditions e.g. heat shock.</text>
</comment>
<comment type="similarity">
    <text evidence="1">Belongs to the heat shock protein 70 family.</text>
</comment>
<proteinExistence type="inferred from homology"/>
<sequence length="631" mass="68391">MGKVLGIDLGTTNSAMAVFEGNEGKIIANKEGRNTTPSVVAFTDKGEILVGDPAKRQAITNPQKTIYSIKRIMGLMMSEDKAKEAQKRLPYKVVDRNGACAVEIADKVYTPQEISAKILMKLKEDAEAYLGEEVSEAVITVPAYFNDAQRKATKEAGTIAGLNVLRIINEPTSAALAYGLDKKHAEKIVVYDLGGGTFDVTVLETGDNVVEVLATGGDAFLGGDDFDNRIIDWAAKEFEAENGIDLKKDVMALQRLKDAAENAKKELSSANETEINLPFITADATGPKHLVKKISRAKFESLIDDLIEQTIQKIDFVIKDAGLAKSDIAEVVMVGGSTRIPKVQQRVKDFIGKELNKSVNPDEVVALGAAIQGGVLKGDVKDVLLLDVTPLSLGIETLGGVMTKIIDRGTTIPVKKSQVFSTAEDNQPAVTIQVLQGERELARDNKSLGMFELSGIPAAPRGVPQIEVTFDIDANGILTVSAKDKATGKSQEIKITGSSGLSDSEIEKMVKDAELHKEEDSKRKSMIEAKNQADSLLYQTEKSLGEFKDQLEESERTKIESAINDLKETLKKENLTKEEIDEKVKALTEVSHKLAEAMYKKENPQAADAQQGNTANAGKKKDDDVIDAEVE</sequence>
<dbReference type="EMBL" id="BX571658">
    <property type="protein sequence ID" value="CAE09632.1"/>
    <property type="molecule type" value="Genomic_DNA"/>
</dbReference>
<dbReference type="RefSeq" id="WP_011138432.1">
    <property type="nucleotide sequence ID" value="NC_005090.1"/>
</dbReference>
<dbReference type="SMR" id="Q7MA35"/>
<dbReference type="STRING" id="273121.WS0494"/>
<dbReference type="KEGG" id="wsu:WS0494"/>
<dbReference type="eggNOG" id="COG0443">
    <property type="taxonomic scope" value="Bacteria"/>
</dbReference>
<dbReference type="HOGENOM" id="CLU_005965_2_1_7"/>
<dbReference type="Proteomes" id="UP000000422">
    <property type="component" value="Chromosome"/>
</dbReference>
<dbReference type="GO" id="GO:0005524">
    <property type="term" value="F:ATP binding"/>
    <property type="evidence" value="ECO:0007669"/>
    <property type="project" value="UniProtKB-UniRule"/>
</dbReference>
<dbReference type="GO" id="GO:0140662">
    <property type="term" value="F:ATP-dependent protein folding chaperone"/>
    <property type="evidence" value="ECO:0007669"/>
    <property type="project" value="InterPro"/>
</dbReference>
<dbReference type="GO" id="GO:0051082">
    <property type="term" value="F:unfolded protein binding"/>
    <property type="evidence" value="ECO:0007669"/>
    <property type="project" value="InterPro"/>
</dbReference>
<dbReference type="CDD" id="cd10234">
    <property type="entry name" value="ASKHA_NBD_HSP70_DnaK-like"/>
    <property type="match status" value="1"/>
</dbReference>
<dbReference type="FunFam" id="2.60.34.10:FF:000014">
    <property type="entry name" value="Chaperone protein DnaK HSP70"/>
    <property type="match status" value="1"/>
</dbReference>
<dbReference type="FunFam" id="1.20.1270.10:FF:000001">
    <property type="entry name" value="Molecular chaperone DnaK"/>
    <property type="match status" value="1"/>
</dbReference>
<dbReference type="FunFam" id="3.30.420.40:FF:000004">
    <property type="entry name" value="Molecular chaperone DnaK"/>
    <property type="match status" value="1"/>
</dbReference>
<dbReference type="FunFam" id="3.90.640.10:FF:000003">
    <property type="entry name" value="Molecular chaperone DnaK"/>
    <property type="match status" value="1"/>
</dbReference>
<dbReference type="Gene3D" id="1.20.1270.10">
    <property type="match status" value="1"/>
</dbReference>
<dbReference type="Gene3D" id="3.30.420.40">
    <property type="match status" value="2"/>
</dbReference>
<dbReference type="Gene3D" id="3.90.640.10">
    <property type="entry name" value="Actin, Chain A, domain 4"/>
    <property type="match status" value="1"/>
</dbReference>
<dbReference type="Gene3D" id="2.60.34.10">
    <property type="entry name" value="Substrate Binding Domain Of DNAk, Chain A, domain 1"/>
    <property type="match status" value="1"/>
</dbReference>
<dbReference type="HAMAP" id="MF_00332">
    <property type="entry name" value="DnaK"/>
    <property type="match status" value="1"/>
</dbReference>
<dbReference type="InterPro" id="IPR043129">
    <property type="entry name" value="ATPase_NBD"/>
</dbReference>
<dbReference type="InterPro" id="IPR012725">
    <property type="entry name" value="Chaperone_DnaK"/>
</dbReference>
<dbReference type="InterPro" id="IPR018181">
    <property type="entry name" value="Heat_shock_70_CS"/>
</dbReference>
<dbReference type="InterPro" id="IPR029048">
    <property type="entry name" value="HSP70_C_sf"/>
</dbReference>
<dbReference type="InterPro" id="IPR029047">
    <property type="entry name" value="HSP70_peptide-bd_sf"/>
</dbReference>
<dbReference type="InterPro" id="IPR013126">
    <property type="entry name" value="Hsp_70_fam"/>
</dbReference>
<dbReference type="NCBIfam" id="NF001413">
    <property type="entry name" value="PRK00290.1"/>
    <property type="match status" value="1"/>
</dbReference>
<dbReference type="NCBIfam" id="NF003520">
    <property type="entry name" value="PRK05183.1"/>
    <property type="match status" value="1"/>
</dbReference>
<dbReference type="NCBIfam" id="TIGR02350">
    <property type="entry name" value="prok_dnaK"/>
    <property type="match status" value="1"/>
</dbReference>
<dbReference type="PANTHER" id="PTHR19375">
    <property type="entry name" value="HEAT SHOCK PROTEIN 70KDA"/>
    <property type="match status" value="1"/>
</dbReference>
<dbReference type="Pfam" id="PF00012">
    <property type="entry name" value="HSP70"/>
    <property type="match status" value="1"/>
</dbReference>
<dbReference type="PRINTS" id="PR00301">
    <property type="entry name" value="HEATSHOCK70"/>
</dbReference>
<dbReference type="SUPFAM" id="SSF53067">
    <property type="entry name" value="Actin-like ATPase domain"/>
    <property type="match status" value="2"/>
</dbReference>
<dbReference type="SUPFAM" id="SSF100934">
    <property type="entry name" value="Heat shock protein 70kD (HSP70), C-terminal subdomain"/>
    <property type="match status" value="1"/>
</dbReference>
<dbReference type="SUPFAM" id="SSF100920">
    <property type="entry name" value="Heat shock protein 70kD (HSP70), peptide-binding domain"/>
    <property type="match status" value="1"/>
</dbReference>
<dbReference type="PROSITE" id="PS00297">
    <property type="entry name" value="HSP70_1"/>
    <property type="match status" value="1"/>
</dbReference>
<dbReference type="PROSITE" id="PS00329">
    <property type="entry name" value="HSP70_2"/>
    <property type="match status" value="1"/>
</dbReference>
<dbReference type="PROSITE" id="PS01036">
    <property type="entry name" value="HSP70_3"/>
    <property type="match status" value="1"/>
</dbReference>
<reference key="1">
    <citation type="journal article" date="2003" name="Proc. Natl. Acad. Sci. U.S.A.">
        <title>Complete genome sequence and analysis of Wolinella succinogenes.</title>
        <authorList>
            <person name="Baar C."/>
            <person name="Eppinger M."/>
            <person name="Raddatz G."/>
            <person name="Simon J."/>
            <person name="Lanz C."/>
            <person name="Klimmek O."/>
            <person name="Nandakumar R."/>
            <person name="Gross R."/>
            <person name="Rosinus A."/>
            <person name="Keller H."/>
            <person name="Jagtap P."/>
            <person name="Linke B."/>
            <person name="Meyer F."/>
            <person name="Lederer H."/>
            <person name="Schuster S.C."/>
        </authorList>
    </citation>
    <scope>NUCLEOTIDE SEQUENCE [LARGE SCALE GENOMIC DNA]</scope>
    <source>
        <strain>ATCC 29543 / DSM 1740 / CCUG 13145 / JCM 31913 / LMG 7466 / NCTC 11488 / FDC 602W</strain>
    </source>
</reference>
<feature type="chain" id="PRO_0000078588" description="Chaperone protein DnaK">
    <location>
        <begin position="1"/>
        <end position="631"/>
    </location>
</feature>
<feature type="region of interest" description="Disordered" evidence="2">
    <location>
        <begin position="600"/>
        <end position="631"/>
    </location>
</feature>
<feature type="modified residue" description="Phosphothreonine; by autocatalysis" evidence="1">
    <location>
        <position position="197"/>
    </location>
</feature>
<evidence type="ECO:0000255" key="1">
    <source>
        <dbReference type="HAMAP-Rule" id="MF_00332"/>
    </source>
</evidence>
<evidence type="ECO:0000256" key="2">
    <source>
        <dbReference type="SAM" id="MobiDB-lite"/>
    </source>
</evidence>